<organism>
    <name type="scientific">Chromobacterium violaceum (strain ATCC 12472 / DSM 30191 / JCM 1249 / CCUG 213 / NBRC 12614 / NCIMB 9131 / NCTC 9757 / MK)</name>
    <dbReference type="NCBI Taxonomy" id="243365"/>
    <lineage>
        <taxon>Bacteria</taxon>
        <taxon>Pseudomonadati</taxon>
        <taxon>Pseudomonadota</taxon>
        <taxon>Betaproteobacteria</taxon>
        <taxon>Neisseriales</taxon>
        <taxon>Chromobacteriaceae</taxon>
        <taxon>Chromobacterium</taxon>
    </lineage>
</organism>
<comment type="function">
    <text evidence="1">Catalyzes the isomerization between 2-isopropylmalate and 3-isopropylmalate, via the formation of 2-isopropylmaleate.</text>
</comment>
<comment type="catalytic activity">
    <reaction evidence="1">
        <text>(2R,3S)-3-isopropylmalate = (2S)-2-isopropylmalate</text>
        <dbReference type="Rhea" id="RHEA:32287"/>
        <dbReference type="ChEBI" id="CHEBI:1178"/>
        <dbReference type="ChEBI" id="CHEBI:35121"/>
        <dbReference type="EC" id="4.2.1.33"/>
    </reaction>
</comment>
<comment type="cofactor">
    <cofactor evidence="1">
        <name>[4Fe-4S] cluster</name>
        <dbReference type="ChEBI" id="CHEBI:49883"/>
    </cofactor>
    <text evidence="1">Binds 1 [4Fe-4S] cluster per subunit.</text>
</comment>
<comment type="pathway">
    <text evidence="1">Amino-acid biosynthesis; L-leucine biosynthesis; L-leucine from 3-methyl-2-oxobutanoate: step 2/4.</text>
</comment>
<comment type="subunit">
    <text evidence="1">Heterodimer of LeuC and LeuD.</text>
</comment>
<comment type="similarity">
    <text evidence="1">Belongs to the aconitase/IPM isomerase family. LeuC type 1 subfamily.</text>
</comment>
<reference key="1">
    <citation type="journal article" date="2003" name="Proc. Natl. Acad. Sci. U.S.A.">
        <title>The complete genome sequence of Chromobacterium violaceum reveals remarkable and exploitable bacterial adaptability.</title>
        <authorList>
            <person name="Vasconcelos A.T.R."/>
            <person name="de Almeida D.F."/>
            <person name="Hungria M."/>
            <person name="Guimaraes C.T."/>
            <person name="Antonio R.V."/>
            <person name="Almeida F.C."/>
            <person name="de Almeida L.G.P."/>
            <person name="de Almeida R."/>
            <person name="Alves-Gomes J.A."/>
            <person name="Andrade E.M."/>
            <person name="Araripe J."/>
            <person name="de Araujo M.F.F."/>
            <person name="Astolfi-Filho S."/>
            <person name="Azevedo V."/>
            <person name="Baptista A.J."/>
            <person name="Bataus L.A.M."/>
            <person name="Batista J.S."/>
            <person name="Belo A."/>
            <person name="van den Berg C."/>
            <person name="Bogo M."/>
            <person name="Bonatto S."/>
            <person name="Bordignon J."/>
            <person name="Brigido M.M."/>
            <person name="Brito C.A."/>
            <person name="Brocchi M."/>
            <person name="Burity H.A."/>
            <person name="Camargo A.A."/>
            <person name="Cardoso D.D.P."/>
            <person name="Carneiro N.P."/>
            <person name="Carraro D.M."/>
            <person name="Carvalho C.M.B."/>
            <person name="Cascardo J.C.M."/>
            <person name="Cavada B.S."/>
            <person name="Chueire L.M.O."/>
            <person name="Creczynski-Pasa T.B."/>
            <person name="Cunha-Junior N.C."/>
            <person name="Fagundes N."/>
            <person name="Falcao C.L."/>
            <person name="Fantinatti F."/>
            <person name="Farias I.P."/>
            <person name="Felipe M.S.S."/>
            <person name="Ferrari L.P."/>
            <person name="Ferro J.A."/>
            <person name="Ferro M.I.T."/>
            <person name="Franco G.R."/>
            <person name="Freitas N.S.A."/>
            <person name="Furlan L.R."/>
            <person name="Gazzinelli R.T."/>
            <person name="Gomes E.A."/>
            <person name="Goncalves P.R."/>
            <person name="Grangeiro T.B."/>
            <person name="Grattapaglia D."/>
            <person name="Grisard E.C."/>
            <person name="Hanna E.S."/>
            <person name="Jardim S.N."/>
            <person name="Laurino J."/>
            <person name="Leoi L.C.T."/>
            <person name="Lima L.F.A."/>
            <person name="Loureiro M.F."/>
            <person name="Lyra M.C.C.P."/>
            <person name="Madeira H.M.F."/>
            <person name="Manfio G.P."/>
            <person name="Maranhao A.Q."/>
            <person name="Martins W.S."/>
            <person name="di Mauro S.M.Z."/>
            <person name="de Medeiros S.R.B."/>
            <person name="Meissner R.V."/>
            <person name="Moreira M.A.M."/>
            <person name="Nascimento F.F."/>
            <person name="Nicolas M.F."/>
            <person name="Oliveira J.G."/>
            <person name="Oliveira S.C."/>
            <person name="Paixao R.F.C."/>
            <person name="Parente J.A."/>
            <person name="Pedrosa F.O."/>
            <person name="Pena S.D.J."/>
            <person name="Pereira J.O."/>
            <person name="Pereira M."/>
            <person name="Pinto L.S.R.C."/>
            <person name="Pinto L.S."/>
            <person name="Porto J.I.R."/>
            <person name="Potrich D.P."/>
            <person name="Ramalho-Neto C.E."/>
            <person name="Reis A.M.M."/>
            <person name="Rigo L.U."/>
            <person name="Rondinelli E."/>
            <person name="Santos E.B.P."/>
            <person name="Santos F.R."/>
            <person name="Schneider M.P.C."/>
            <person name="Seuanez H.N."/>
            <person name="Silva A.M.R."/>
            <person name="da Silva A.L.C."/>
            <person name="Silva D.W."/>
            <person name="Silva R."/>
            <person name="Simoes I.C."/>
            <person name="Simon D."/>
            <person name="Soares C.M.A."/>
            <person name="Soares R.B.A."/>
            <person name="Souza E.M."/>
            <person name="Souza K.R.L."/>
            <person name="Souza R.C."/>
            <person name="Steffens M.B.R."/>
            <person name="Steindel M."/>
            <person name="Teixeira S.R."/>
            <person name="Urmenyi T."/>
            <person name="Vettore A."/>
            <person name="Wassem R."/>
            <person name="Zaha A."/>
            <person name="Simpson A.J.G."/>
        </authorList>
    </citation>
    <scope>NUCLEOTIDE SEQUENCE [LARGE SCALE GENOMIC DNA]</scope>
    <source>
        <strain>ATCC 12472 / DSM 30191 / JCM 1249 / CCUG 213 / NBRC 12614 / NCIMB 9131 / NCTC 9757 / MK</strain>
    </source>
</reference>
<evidence type="ECO:0000255" key="1">
    <source>
        <dbReference type="HAMAP-Rule" id="MF_01026"/>
    </source>
</evidence>
<proteinExistence type="inferred from homology"/>
<accession>Q7NUB6</accession>
<dbReference type="EC" id="4.2.1.33" evidence="1"/>
<dbReference type="EMBL" id="AE016825">
    <property type="protein sequence ID" value="AAQ60452.1"/>
    <property type="molecule type" value="Genomic_DNA"/>
</dbReference>
<dbReference type="RefSeq" id="WP_011136331.1">
    <property type="nucleotide sequence ID" value="NC_005085.1"/>
</dbReference>
<dbReference type="SMR" id="Q7NUB6"/>
<dbReference type="STRING" id="243365.CV_2784"/>
<dbReference type="KEGG" id="cvi:CV_2784"/>
<dbReference type="eggNOG" id="COG0065">
    <property type="taxonomic scope" value="Bacteria"/>
</dbReference>
<dbReference type="HOGENOM" id="CLU_006714_3_4_4"/>
<dbReference type="OrthoDB" id="9802769at2"/>
<dbReference type="UniPathway" id="UPA00048">
    <property type="reaction ID" value="UER00071"/>
</dbReference>
<dbReference type="Proteomes" id="UP000001424">
    <property type="component" value="Chromosome"/>
</dbReference>
<dbReference type="GO" id="GO:0003861">
    <property type="term" value="F:3-isopropylmalate dehydratase activity"/>
    <property type="evidence" value="ECO:0007669"/>
    <property type="project" value="UniProtKB-UniRule"/>
</dbReference>
<dbReference type="GO" id="GO:0051539">
    <property type="term" value="F:4 iron, 4 sulfur cluster binding"/>
    <property type="evidence" value="ECO:0007669"/>
    <property type="project" value="UniProtKB-KW"/>
</dbReference>
<dbReference type="GO" id="GO:0046872">
    <property type="term" value="F:metal ion binding"/>
    <property type="evidence" value="ECO:0007669"/>
    <property type="project" value="UniProtKB-KW"/>
</dbReference>
<dbReference type="GO" id="GO:0009098">
    <property type="term" value="P:L-leucine biosynthetic process"/>
    <property type="evidence" value="ECO:0007669"/>
    <property type="project" value="UniProtKB-UniRule"/>
</dbReference>
<dbReference type="CDD" id="cd01583">
    <property type="entry name" value="IPMI"/>
    <property type="match status" value="1"/>
</dbReference>
<dbReference type="FunFam" id="3.30.499.10:FF:000007">
    <property type="entry name" value="3-isopropylmalate dehydratase large subunit"/>
    <property type="match status" value="1"/>
</dbReference>
<dbReference type="Gene3D" id="3.30.499.10">
    <property type="entry name" value="Aconitase, domain 3"/>
    <property type="match status" value="2"/>
</dbReference>
<dbReference type="HAMAP" id="MF_01026">
    <property type="entry name" value="LeuC_type1"/>
    <property type="match status" value="1"/>
</dbReference>
<dbReference type="InterPro" id="IPR004430">
    <property type="entry name" value="3-IsopropMal_deHydase_lsu"/>
</dbReference>
<dbReference type="InterPro" id="IPR015931">
    <property type="entry name" value="Acnase/IPM_dHydase_lsu_aba_1/3"/>
</dbReference>
<dbReference type="InterPro" id="IPR001030">
    <property type="entry name" value="Acoase/IPM_deHydtase_lsu_aba"/>
</dbReference>
<dbReference type="InterPro" id="IPR018136">
    <property type="entry name" value="Aconitase_4Fe-4S_BS"/>
</dbReference>
<dbReference type="InterPro" id="IPR036008">
    <property type="entry name" value="Aconitase_4Fe-4S_dom"/>
</dbReference>
<dbReference type="InterPro" id="IPR050067">
    <property type="entry name" value="IPM_dehydratase_rel_enz"/>
</dbReference>
<dbReference type="InterPro" id="IPR033941">
    <property type="entry name" value="IPMI_cat"/>
</dbReference>
<dbReference type="NCBIfam" id="TIGR00170">
    <property type="entry name" value="leuC"/>
    <property type="match status" value="1"/>
</dbReference>
<dbReference type="NCBIfam" id="NF004016">
    <property type="entry name" value="PRK05478.1"/>
    <property type="match status" value="1"/>
</dbReference>
<dbReference type="NCBIfam" id="NF009116">
    <property type="entry name" value="PRK12466.1"/>
    <property type="match status" value="1"/>
</dbReference>
<dbReference type="PANTHER" id="PTHR43822:SF9">
    <property type="entry name" value="3-ISOPROPYLMALATE DEHYDRATASE"/>
    <property type="match status" value="1"/>
</dbReference>
<dbReference type="PANTHER" id="PTHR43822">
    <property type="entry name" value="HOMOACONITASE, MITOCHONDRIAL-RELATED"/>
    <property type="match status" value="1"/>
</dbReference>
<dbReference type="Pfam" id="PF00330">
    <property type="entry name" value="Aconitase"/>
    <property type="match status" value="1"/>
</dbReference>
<dbReference type="PRINTS" id="PR00415">
    <property type="entry name" value="ACONITASE"/>
</dbReference>
<dbReference type="SUPFAM" id="SSF53732">
    <property type="entry name" value="Aconitase iron-sulfur domain"/>
    <property type="match status" value="1"/>
</dbReference>
<dbReference type="PROSITE" id="PS00450">
    <property type="entry name" value="ACONITASE_1"/>
    <property type="match status" value="1"/>
</dbReference>
<dbReference type="PROSITE" id="PS01244">
    <property type="entry name" value="ACONITASE_2"/>
    <property type="match status" value="1"/>
</dbReference>
<sequence length="471" mass="49966">MTAQTLYDKLWNSHVVREEADGTALLYIDRHLVHEVTSPQAFEGLKLAGRRLWRVDSVVSTADHNTPTDHWDQGIQDPISRQQVETLDANIKAFGALAYFPFKDKGQGIVHVMGPEQGATLPGMTVVCGDSHTSTHGAFGALAHGIGTSEVEHVMATQCLVAKKSKNMLVRVDGRLGAGITAKDVALAIIGKIGTAGGTGYAIEFGGEAIRGLSMEGRMTLCNMAIEGGARSGMVAVDDKTIEYVKGRPFAPKGEQWNQAVAYWNTLHSDDGAHFDQVVALDAADIQPQVTWGTSPEMVAEVGGKVPNPANESDPVKKAGIERALAYMGLEADTPIEQIPVDVVFIGSCTNSRIEDLREAAAVAKGRSKAGNVKQVLVVPGSGLVKAQAEAEGLDKIFVAAGFEWREPGCSMCLAMNADRLLPGERCASTSNRNFEGRQGQGGRTHLVSPAMAAAAAVAGRFVDVRRLAAG</sequence>
<gene>
    <name evidence="1" type="primary">leuC</name>
    <name type="synonym">leuC1</name>
    <name type="ordered locus">CV_2784</name>
</gene>
<keyword id="KW-0004">4Fe-4S</keyword>
<keyword id="KW-0028">Amino-acid biosynthesis</keyword>
<keyword id="KW-0100">Branched-chain amino acid biosynthesis</keyword>
<keyword id="KW-0408">Iron</keyword>
<keyword id="KW-0411">Iron-sulfur</keyword>
<keyword id="KW-0432">Leucine biosynthesis</keyword>
<keyword id="KW-0456">Lyase</keyword>
<keyword id="KW-0479">Metal-binding</keyword>
<keyword id="KW-1185">Reference proteome</keyword>
<protein>
    <recommendedName>
        <fullName evidence="1">3-isopropylmalate dehydratase large subunit</fullName>
        <ecNumber evidence="1">4.2.1.33</ecNumber>
    </recommendedName>
    <alternativeName>
        <fullName evidence="1">Alpha-IPM isomerase</fullName>
        <shortName evidence="1">IPMI</shortName>
    </alternativeName>
    <alternativeName>
        <fullName evidence="1">Isopropylmalate isomerase</fullName>
    </alternativeName>
</protein>
<name>LEUC_CHRVO</name>
<feature type="chain" id="PRO_0000076737" description="3-isopropylmalate dehydratase large subunit">
    <location>
        <begin position="1"/>
        <end position="471"/>
    </location>
</feature>
<feature type="binding site" evidence="1">
    <location>
        <position position="349"/>
    </location>
    <ligand>
        <name>[4Fe-4S] cluster</name>
        <dbReference type="ChEBI" id="CHEBI:49883"/>
    </ligand>
</feature>
<feature type="binding site" evidence="1">
    <location>
        <position position="410"/>
    </location>
    <ligand>
        <name>[4Fe-4S] cluster</name>
        <dbReference type="ChEBI" id="CHEBI:49883"/>
    </ligand>
</feature>
<feature type="binding site" evidence="1">
    <location>
        <position position="413"/>
    </location>
    <ligand>
        <name>[4Fe-4S] cluster</name>
        <dbReference type="ChEBI" id="CHEBI:49883"/>
    </ligand>
</feature>